<evidence type="ECO:0000255" key="1"/>
<evidence type="ECO:0000255" key="2">
    <source>
        <dbReference type="PROSITE-ProRule" id="PRU00114"/>
    </source>
</evidence>
<evidence type="ECO:0000305" key="3"/>
<protein>
    <recommendedName>
        <fullName>SLA class II histocompatibility antigen, DQ haplotype D alpha chain</fullName>
    </recommendedName>
</protein>
<keyword id="KW-1064">Adaptive immunity</keyword>
<keyword id="KW-1015">Disulfide bond</keyword>
<keyword id="KW-0325">Glycoprotein</keyword>
<keyword id="KW-0391">Immunity</keyword>
<keyword id="KW-0472">Membrane</keyword>
<keyword id="KW-0491">MHC II</keyword>
<keyword id="KW-1185">Reference proteome</keyword>
<keyword id="KW-0732">Signal</keyword>
<keyword id="KW-0812">Transmembrane</keyword>
<keyword id="KW-1133">Transmembrane helix</keyword>
<sequence length="255" mass="28067">MVPGRVLMWGALALTAVMSACGGEDIAADHVASYGLNVYQSYGPSGYYTHEFDGDEEFYVDLGKKETVWQLPLFSKFRSFDPQGALRNIATAKHNLNILIKRSNNTAAVNQVPEVTVFPKSPVMLGQPNTLICHVDNIFPPVINITWLKNGHSVTEGFSETSFLSKNDHSFLKISYLTFLPSDDDFYDCKVEHWGLDKPLLKHWEPEIPAPMSELTETVVCALGLIVGLVGIVVGTVFIIQGLRSGGPSRHQGSL</sequence>
<reference key="1">
    <citation type="journal article" date="1990" name="Immunogenetics">
        <title>Class II genes of miniature swine. III. Characterization of an expressed pig class II gene homologous to HLA-DQA.</title>
        <authorList>
            <person name="Hirsch F."/>
            <person name="Sachs D.H."/>
            <person name="Gustafsson K."/>
            <person name="Pratt K."/>
            <person name="Germana S."/>
            <person name="Leguern C."/>
        </authorList>
    </citation>
    <scope>NUCLEOTIDE SEQUENCE [MRNA]</scope>
</reference>
<proteinExistence type="evidence at transcript level"/>
<organism>
    <name type="scientific">Sus scrofa</name>
    <name type="common">Pig</name>
    <dbReference type="NCBI Taxonomy" id="9823"/>
    <lineage>
        <taxon>Eukaryota</taxon>
        <taxon>Metazoa</taxon>
        <taxon>Chordata</taxon>
        <taxon>Craniata</taxon>
        <taxon>Vertebrata</taxon>
        <taxon>Euteleostomi</taxon>
        <taxon>Mammalia</taxon>
        <taxon>Eutheria</taxon>
        <taxon>Laurasiatheria</taxon>
        <taxon>Artiodactyla</taxon>
        <taxon>Suina</taxon>
        <taxon>Suidae</taxon>
        <taxon>Sus</taxon>
    </lineage>
</organism>
<name>HA2D_PIG</name>
<feature type="signal peptide">
    <location>
        <begin position="1"/>
        <end position="23"/>
    </location>
</feature>
<feature type="chain" id="PRO_0000018982" description="SLA class II histocompatibility antigen, DQ haplotype D alpha chain">
    <location>
        <begin position="24"/>
        <end position="255"/>
    </location>
</feature>
<feature type="topological domain" description="Extracellular" evidence="1">
    <location>
        <begin position="24"/>
        <end position="217"/>
    </location>
</feature>
<feature type="transmembrane region" description="Helical" evidence="1">
    <location>
        <begin position="218"/>
        <end position="240"/>
    </location>
</feature>
<feature type="topological domain" description="Cytoplasmic">
    <location>
        <begin position="241"/>
        <end position="255"/>
    </location>
</feature>
<feature type="domain" description="Ig-like C1-type">
    <location>
        <begin position="113"/>
        <end position="205"/>
    </location>
</feature>
<feature type="region of interest" description="Alpha-1">
    <location>
        <begin position="24"/>
        <end position="120"/>
    </location>
</feature>
<feature type="region of interest" description="Alpha-2">
    <location>
        <begin position="121"/>
        <end position="204"/>
    </location>
</feature>
<feature type="region of interest" description="Connecting peptide">
    <location>
        <begin position="205"/>
        <end position="217"/>
    </location>
</feature>
<feature type="glycosylation site" description="N-linked (GlcNAc...) asparagine" evidence="1">
    <location>
        <position position="104"/>
    </location>
</feature>
<feature type="glycosylation site" description="N-linked (GlcNAc...) asparagine" evidence="1">
    <location>
        <position position="144"/>
    </location>
</feature>
<feature type="disulfide bond" evidence="2">
    <location>
        <begin position="133"/>
        <end position="189"/>
    </location>
</feature>
<dbReference type="EMBL" id="M29939">
    <property type="protein sequence ID" value="AAA31083.1"/>
    <property type="molecule type" value="mRNA"/>
</dbReference>
<dbReference type="PIR" id="I46606">
    <property type="entry name" value="I46606"/>
</dbReference>
<dbReference type="SMR" id="P15981"/>
<dbReference type="FunCoup" id="P15981">
    <property type="interactions" value="45"/>
</dbReference>
<dbReference type="STRING" id="9823.ENSSSCP00000070034"/>
<dbReference type="GlyGen" id="P15981">
    <property type="glycosylation" value="2 sites"/>
</dbReference>
<dbReference type="PaxDb" id="9823-ENSSSCP00000001574"/>
<dbReference type="PeptideAtlas" id="P15981"/>
<dbReference type="Ensembl" id="ENSSSCT00015099990.1">
    <property type="protein sequence ID" value="ENSSSCP00015041354.1"/>
    <property type="gene ID" value="ENSSSCG00015063820.1"/>
</dbReference>
<dbReference type="Ensembl" id="ENSSSCT00015100056.1">
    <property type="protein sequence ID" value="ENSSSCP00015041384.1"/>
    <property type="gene ID" value="ENSSSCG00015063820.1"/>
</dbReference>
<dbReference type="Ensembl" id="ENSSSCT00015101320.1">
    <property type="protein sequence ID" value="ENSSSCP00015041959.1"/>
    <property type="gene ID" value="ENSSSCG00015063820.1"/>
</dbReference>
<dbReference type="Ensembl" id="ENSSSCT00130037498">
    <property type="protein sequence ID" value="ENSSSCP00130026317"/>
    <property type="gene ID" value="ENSSSCG00130019330"/>
</dbReference>
<dbReference type="eggNOG" id="ENOG502RXYJ">
    <property type="taxonomic scope" value="Eukaryota"/>
</dbReference>
<dbReference type="InParanoid" id="P15981"/>
<dbReference type="Reactome" id="R-SSC-202424">
    <property type="pathway name" value="Downstream TCR signaling"/>
</dbReference>
<dbReference type="Reactome" id="R-SSC-202427">
    <property type="pathway name" value="Phosphorylation of CD3 and TCR zeta chains"/>
</dbReference>
<dbReference type="Reactome" id="R-SSC-202430">
    <property type="pathway name" value="Translocation of ZAP-70 to Immunological synapse"/>
</dbReference>
<dbReference type="Reactome" id="R-SSC-202433">
    <property type="pathway name" value="Generation of second messenger molecules"/>
</dbReference>
<dbReference type="Reactome" id="R-SSC-2132295">
    <property type="pathway name" value="MHC class II antigen presentation"/>
</dbReference>
<dbReference type="Reactome" id="R-SSC-389948">
    <property type="pathway name" value="Co-inhibition by PD-1"/>
</dbReference>
<dbReference type="Proteomes" id="UP000008227">
    <property type="component" value="Unplaced"/>
</dbReference>
<dbReference type="Proteomes" id="UP000314985">
    <property type="component" value="Unplaced"/>
</dbReference>
<dbReference type="Proteomes" id="UP000694570">
    <property type="component" value="Unplaced"/>
</dbReference>
<dbReference type="Proteomes" id="UP000694571">
    <property type="component" value="Unplaced"/>
</dbReference>
<dbReference type="Proteomes" id="UP000694720">
    <property type="component" value="Unplaced"/>
</dbReference>
<dbReference type="Proteomes" id="UP000694722">
    <property type="component" value="Unplaced"/>
</dbReference>
<dbReference type="Proteomes" id="UP000694723">
    <property type="component" value="Unplaced"/>
</dbReference>
<dbReference type="Proteomes" id="UP000694724">
    <property type="component" value="Unplaced"/>
</dbReference>
<dbReference type="Proteomes" id="UP000694725">
    <property type="component" value="Unplaced"/>
</dbReference>
<dbReference type="Proteomes" id="UP000694726">
    <property type="component" value="Unplaced"/>
</dbReference>
<dbReference type="Proteomes" id="UP000694727">
    <property type="component" value="Unplaced"/>
</dbReference>
<dbReference type="Proteomes" id="UP000694728">
    <property type="component" value="Unplaced"/>
</dbReference>
<dbReference type="GO" id="GO:0031902">
    <property type="term" value="C:late endosome membrane"/>
    <property type="evidence" value="ECO:0000318"/>
    <property type="project" value="GO_Central"/>
</dbReference>
<dbReference type="GO" id="GO:0005765">
    <property type="term" value="C:lysosomal membrane"/>
    <property type="evidence" value="ECO:0000318"/>
    <property type="project" value="GO_Central"/>
</dbReference>
<dbReference type="GO" id="GO:0042613">
    <property type="term" value="C:MHC class II protein complex"/>
    <property type="evidence" value="ECO:0000318"/>
    <property type="project" value="GO_Central"/>
</dbReference>
<dbReference type="GO" id="GO:0023026">
    <property type="term" value="F:MHC class II protein complex binding"/>
    <property type="evidence" value="ECO:0000318"/>
    <property type="project" value="GO_Central"/>
</dbReference>
<dbReference type="GO" id="GO:0042605">
    <property type="term" value="F:peptide antigen binding"/>
    <property type="evidence" value="ECO:0000318"/>
    <property type="project" value="GO_Central"/>
</dbReference>
<dbReference type="GO" id="GO:0002250">
    <property type="term" value="P:adaptive immune response"/>
    <property type="evidence" value="ECO:0007669"/>
    <property type="project" value="UniProtKB-KW"/>
</dbReference>
<dbReference type="GO" id="GO:0019886">
    <property type="term" value="P:antigen processing and presentation of exogenous peptide antigen via MHC class II"/>
    <property type="evidence" value="ECO:0000318"/>
    <property type="project" value="GO_Central"/>
</dbReference>
<dbReference type="GO" id="GO:0002503">
    <property type="term" value="P:peptide antigen assembly with MHC class II protein complex"/>
    <property type="evidence" value="ECO:0000318"/>
    <property type="project" value="GO_Central"/>
</dbReference>
<dbReference type="GO" id="GO:0050778">
    <property type="term" value="P:positive regulation of immune response"/>
    <property type="evidence" value="ECO:0000318"/>
    <property type="project" value="GO_Central"/>
</dbReference>
<dbReference type="GO" id="GO:0050870">
    <property type="term" value="P:positive regulation of T cell activation"/>
    <property type="evidence" value="ECO:0000318"/>
    <property type="project" value="GO_Central"/>
</dbReference>
<dbReference type="CDD" id="cd21008">
    <property type="entry name" value="IgC1_MHC_II_alpha_HLA-DQ"/>
    <property type="match status" value="1"/>
</dbReference>
<dbReference type="FunFam" id="2.60.40.10:FF:000280">
    <property type="entry name" value="HLA class II histocompatibility antigen, DR alpha chain"/>
    <property type="match status" value="1"/>
</dbReference>
<dbReference type="FunFam" id="3.10.320.10:FF:000002">
    <property type="entry name" value="HLA class II histocompatibility antigen, DR alpha chain"/>
    <property type="match status" value="1"/>
</dbReference>
<dbReference type="Gene3D" id="3.10.320.10">
    <property type="entry name" value="Class II Histocompatibility Antigen, M Beta Chain, Chain B, domain 1"/>
    <property type="match status" value="1"/>
</dbReference>
<dbReference type="Gene3D" id="2.60.40.10">
    <property type="entry name" value="Immunoglobulins"/>
    <property type="match status" value="1"/>
</dbReference>
<dbReference type="InterPro" id="IPR007110">
    <property type="entry name" value="Ig-like_dom"/>
</dbReference>
<dbReference type="InterPro" id="IPR036179">
    <property type="entry name" value="Ig-like_dom_sf"/>
</dbReference>
<dbReference type="InterPro" id="IPR013783">
    <property type="entry name" value="Ig-like_fold"/>
</dbReference>
<dbReference type="InterPro" id="IPR003006">
    <property type="entry name" value="Ig/MHC_CS"/>
</dbReference>
<dbReference type="InterPro" id="IPR003597">
    <property type="entry name" value="Ig_C1-set"/>
</dbReference>
<dbReference type="InterPro" id="IPR050160">
    <property type="entry name" value="MHC/Immunoglobulin"/>
</dbReference>
<dbReference type="InterPro" id="IPR011162">
    <property type="entry name" value="MHC_I/II-like_Ag-recog"/>
</dbReference>
<dbReference type="InterPro" id="IPR014745">
    <property type="entry name" value="MHC_II_a/b_N"/>
</dbReference>
<dbReference type="InterPro" id="IPR001003">
    <property type="entry name" value="MHC_II_a_N"/>
</dbReference>
<dbReference type="PANTHER" id="PTHR19944:SF59">
    <property type="entry name" value="HLA CLASS II HISTOCOMPATIBILITY ANTIGEN, DQ ALPHA 1 CHAIN"/>
    <property type="match status" value="1"/>
</dbReference>
<dbReference type="PANTHER" id="PTHR19944">
    <property type="entry name" value="MHC CLASS II-RELATED"/>
    <property type="match status" value="1"/>
</dbReference>
<dbReference type="Pfam" id="PF07654">
    <property type="entry name" value="C1-set"/>
    <property type="match status" value="1"/>
</dbReference>
<dbReference type="Pfam" id="PF00993">
    <property type="entry name" value="MHC_II_alpha"/>
    <property type="match status" value="1"/>
</dbReference>
<dbReference type="SMART" id="SM00407">
    <property type="entry name" value="IGc1"/>
    <property type="match status" value="1"/>
</dbReference>
<dbReference type="SMART" id="SM00920">
    <property type="entry name" value="MHC_II_alpha"/>
    <property type="match status" value="1"/>
</dbReference>
<dbReference type="SUPFAM" id="SSF48726">
    <property type="entry name" value="Immunoglobulin"/>
    <property type="match status" value="1"/>
</dbReference>
<dbReference type="SUPFAM" id="SSF54452">
    <property type="entry name" value="MHC antigen-recognition domain"/>
    <property type="match status" value="1"/>
</dbReference>
<dbReference type="PROSITE" id="PS50835">
    <property type="entry name" value="IG_LIKE"/>
    <property type="match status" value="1"/>
</dbReference>
<dbReference type="PROSITE" id="PS00290">
    <property type="entry name" value="IG_MHC"/>
    <property type="match status" value="1"/>
</dbReference>
<accession>P15981</accession>
<comment type="subcellular location">
    <subcellularLocation>
        <location evidence="3">Membrane</location>
        <topology evidence="3">Single-pass type I membrane protein</topology>
    </subcellularLocation>
</comment>
<comment type="similarity">
    <text evidence="3">Belongs to the MHC class II family.</text>
</comment>